<organism>
    <name type="scientific">Synechococcus sp. (strain JA-2-3B'a(2-13))</name>
    <name type="common">Cyanobacteria bacterium Yellowstone B-Prime</name>
    <dbReference type="NCBI Taxonomy" id="321332"/>
    <lineage>
        <taxon>Bacteria</taxon>
        <taxon>Bacillati</taxon>
        <taxon>Cyanobacteriota</taxon>
        <taxon>Cyanophyceae</taxon>
        <taxon>Synechococcales</taxon>
        <taxon>Synechococcaceae</taxon>
        <taxon>Synechococcus</taxon>
    </lineage>
</organism>
<evidence type="ECO:0000255" key="1">
    <source>
        <dbReference type="HAMAP-Rule" id="MF_01333"/>
    </source>
</evidence>
<evidence type="ECO:0000305" key="2"/>
<gene>
    <name evidence="1" type="primary">rplE</name>
    <name evidence="1" type="synonym">rpl5</name>
    <name type="ordered locus">CYB_2609</name>
</gene>
<accession>Q2JIL5</accession>
<protein>
    <recommendedName>
        <fullName evidence="1">Large ribosomal subunit protein uL5</fullName>
    </recommendedName>
    <alternativeName>
        <fullName evidence="2">50S ribosomal protein L5</fullName>
    </alternativeName>
</protein>
<proteinExistence type="inferred from homology"/>
<dbReference type="EMBL" id="CP000240">
    <property type="protein sequence ID" value="ABD03539.1"/>
    <property type="molecule type" value="Genomic_DNA"/>
</dbReference>
<dbReference type="RefSeq" id="WP_011434164.1">
    <property type="nucleotide sequence ID" value="NC_007776.1"/>
</dbReference>
<dbReference type="SMR" id="Q2JIL5"/>
<dbReference type="STRING" id="321332.CYB_2609"/>
<dbReference type="KEGG" id="cyb:CYB_2609"/>
<dbReference type="eggNOG" id="COG0094">
    <property type="taxonomic scope" value="Bacteria"/>
</dbReference>
<dbReference type="HOGENOM" id="CLU_061015_2_1_3"/>
<dbReference type="OrthoDB" id="9806626at2"/>
<dbReference type="Proteomes" id="UP000001938">
    <property type="component" value="Chromosome"/>
</dbReference>
<dbReference type="GO" id="GO:1990904">
    <property type="term" value="C:ribonucleoprotein complex"/>
    <property type="evidence" value="ECO:0007669"/>
    <property type="project" value="UniProtKB-KW"/>
</dbReference>
<dbReference type="GO" id="GO:0005840">
    <property type="term" value="C:ribosome"/>
    <property type="evidence" value="ECO:0007669"/>
    <property type="project" value="UniProtKB-KW"/>
</dbReference>
<dbReference type="GO" id="GO:0019843">
    <property type="term" value="F:rRNA binding"/>
    <property type="evidence" value="ECO:0007669"/>
    <property type="project" value="UniProtKB-UniRule"/>
</dbReference>
<dbReference type="GO" id="GO:0003735">
    <property type="term" value="F:structural constituent of ribosome"/>
    <property type="evidence" value="ECO:0007669"/>
    <property type="project" value="InterPro"/>
</dbReference>
<dbReference type="GO" id="GO:0000049">
    <property type="term" value="F:tRNA binding"/>
    <property type="evidence" value="ECO:0007669"/>
    <property type="project" value="UniProtKB-UniRule"/>
</dbReference>
<dbReference type="GO" id="GO:0006412">
    <property type="term" value="P:translation"/>
    <property type="evidence" value="ECO:0007669"/>
    <property type="project" value="UniProtKB-UniRule"/>
</dbReference>
<dbReference type="FunFam" id="3.30.1440.10:FF:000001">
    <property type="entry name" value="50S ribosomal protein L5"/>
    <property type="match status" value="1"/>
</dbReference>
<dbReference type="Gene3D" id="3.30.1440.10">
    <property type="match status" value="1"/>
</dbReference>
<dbReference type="HAMAP" id="MF_01333_B">
    <property type="entry name" value="Ribosomal_uL5_B"/>
    <property type="match status" value="1"/>
</dbReference>
<dbReference type="InterPro" id="IPR002132">
    <property type="entry name" value="Ribosomal_uL5"/>
</dbReference>
<dbReference type="InterPro" id="IPR020930">
    <property type="entry name" value="Ribosomal_uL5_bac-type"/>
</dbReference>
<dbReference type="InterPro" id="IPR031309">
    <property type="entry name" value="Ribosomal_uL5_C"/>
</dbReference>
<dbReference type="InterPro" id="IPR020929">
    <property type="entry name" value="Ribosomal_uL5_CS"/>
</dbReference>
<dbReference type="InterPro" id="IPR022803">
    <property type="entry name" value="Ribosomal_uL5_dom_sf"/>
</dbReference>
<dbReference type="InterPro" id="IPR031310">
    <property type="entry name" value="Ribosomal_uL5_N"/>
</dbReference>
<dbReference type="NCBIfam" id="NF000585">
    <property type="entry name" value="PRK00010.1"/>
    <property type="match status" value="1"/>
</dbReference>
<dbReference type="PANTHER" id="PTHR11994">
    <property type="entry name" value="60S RIBOSOMAL PROTEIN L11-RELATED"/>
    <property type="match status" value="1"/>
</dbReference>
<dbReference type="Pfam" id="PF00281">
    <property type="entry name" value="Ribosomal_L5"/>
    <property type="match status" value="1"/>
</dbReference>
<dbReference type="Pfam" id="PF00673">
    <property type="entry name" value="Ribosomal_L5_C"/>
    <property type="match status" value="1"/>
</dbReference>
<dbReference type="PIRSF" id="PIRSF002161">
    <property type="entry name" value="Ribosomal_L5"/>
    <property type="match status" value="1"/>
</dbReference>
<dbReference type="SUPFAM" id="SSF55282">
    <property type="entry name" value="RL5-like"/>
    <property type="match status" value="1"/>
</dbReference>
<dbReference type="PROSITE" id="PS00358">
    <property type="entry name" value="RIBOSOMAL_L5"/>
    <property type="match status" value="1"/>
</dbReference>
<reference key="1">
    <citation type="journal article" date="2007" name="ISME J.">
        <title>Population level functional diversity in a microbial community revealed by comparative genomic and metagenomic analyses.</title>
        <authorList>
            <person name="Bhaya D."/>
            <person name="Grossman A.R."/>
            <person name="Steunou A.-S."/>
            <person name="Khuri N."/>
            <person name="Cohan F.M."/>
            <person name="Hamamura N."/>
            <person name="Melendrez M.C."/>
            <person name="Bateson M.M."/>
            <person name="Ward D.M."/>
            <person name="Heidelberg J.F."/>
        </authorList>
    </citation>
    <scope>NUCLEOTIDE SEQUENCE [LARGE SCALE GENOMIC DNA]</scope>
    <source>
        <strain>JA-2-3B'a(2-13)</strain>
    </source>
</reference>
<name>RL5_SYNJB</name>
<feature type="chain" id="PRO_0000243076" description="Large ribosomal subunit protein uL5">
    <location>
        <begin position="1"/>
        <end position="180"/>
    </location>
</feature>
<comment type="function">
    <text evidence="1">This is one of the proteins that bind and probably mediate the attachment of the 5S RNA into the large ribosomal subunit, where it forms part of the central protuberance. In the 70S ribosome it contacts protein S13 of the 30S subunit (bridge B1b), connecting the 2 subunits; this bridge is implicated in subunit movement. Contacts the P site tRNA; the 5S rRNA and some of its associated proteins might help stabilize positioning of ribosome-bound tRNAs.</text>
</comment>
<comment type="subunit">
    <text evidence="1">Part of the 50S ribosomal subunit; part of the 5S rRNA/L5/L18/L25 subcomplex. Contacts the 5S rRNA and the P site tRNA. Forms a bridge to the 30S subunit in the 70S ribosome.</text>
</comment>
<comment type="similarity">
    <text evidence="1">Belongs to the universal ribosomal protein uL5 family.</text>
</comment>
<keyword id="KW-1185">Reference proteome</keyword>
<keyword id="KW-0687">Ribonucleoprotein</keyword>
<keyword id="KW-0689">Ribosomal protein</keyword>
<keyword id="KW-0694">RNA-binding</keyword>
<keyword id="KW-0699">rRNA-binding</keyword>
<keyword id="KW-0820">tRNA-binding</keyword>
<sequence length="180" mass="20201">MPQRLQILYNTVIVPKLQKELGYTNIHQVPRLEKIVINRGLGEASQNAKALESSIAEISAITGQRPVITRAKKAIASFKIRKGMPVGLMVTLRRERMYAFLDRLINVALPRIRDFRGVSPKAFDGRGNYTLGIREQLIFPEINYDSVDQLRGMDISIVTTAKTDEEGRALLKAFGMPFAS</sequence>